<evidence type="ECO:0000255" key="1">
    <source>
        <dbReference type="HAMAP-Rule" id="MF_00251"/>
    </source>
</evidence>
<evidence type="ECO:0000305" key="2"/>
<accession>A8Z334</accession>
<protein>
    <recommendedName>
        <fullName evidence="1">Large ribosomal subunit protein bL36</fullName>
    </recommendedName>
    <alternativeName>
        <fullName evidence="2">50S ribosomal protein L36</fullName>
    </alternativeName>
</protein>
<sequence>MKVRPSVKPICEKCKVIKRKGKVMVICENPKHKQRQG</sequence>
<feature type="chain" id="PRO_1000078489" description="Large ribosomal subunit protein bL36">
    <location>
        <begin position="1"/>
        <end position="37"/>
    </location>
</feature>
<reference key="1">
    <citation type="journal article" date="2007" name="BMC Microbiol.">
        <title>Subtle genetic changes enhance virulence of methicillin resistant and sensitive Staphylococcus aureus.</title>
        <authorList>
            <person name="Highlander S.K."/>
            <person name="Hulten K.G."/>
            <person name="Qin X."/>
            <person name="Jiang H."/>
            <person name="Yerrapragada S."/>
            <person name="Mason E.O. Jr."/>
            <person name="Shang Y."/>
            <person name="Williams T.M."/>
            <person name="Fortunov R.M."/>
            <person name="Liu Y."/>
            <person name="Igboeli O."/>
            <person name="Petrosino J."/>
            <person name="Tirumalai M."/>
            <person name="Uzman A."/>
            <person name="Fox G.E."/>
            <person name="Cardenas A.M."/>
            <person name="Muzny D.M."/>
            <person name="Hemphill L."/>
            <person name="Ding Y."/>
            <person name="Dugan S."/>
            <person name="Blyth P.R."/>
            <person name="Buhay C.J."/>
            <person name="Dinh H.H."/>
            <person name="Hawes A.C."/>
            <person name="Holder M."/>
            <person name="Kovar C.L."/>
            <person name="Lee S.L."/>
            <person name="Liu W."/>
            <person name="Nazareth L.V."/>
            <person name="Wang Q."/>
            <person name="Zhou J."/>
            <person name="Kaplan S.L."/>
            <person name="Weinstock G.M."/>
        </authorList>
    </citation>
    <scope>NUCLEOTIDE SEQUENCE [LARGE SCALE GENOMIC DNA]</scope>
    <source>
        <strain>USA300 / TCH1516</strain>
    </source>
</reference>
<organism>
    <name type="scientific">Staphylococcus aureus (strain USA300 / TCH1516)</name>
    <dbReference type="NCBI Taxonomy" id="451516"/>
    <lineage>
        <taxon>Bacteria</taxon>
        <taxon>Bacillati</taxon>
        <taxon>Bacillota</taxon>
        <taxon>Bacilli</taxon>
        <taxon>Bacillales</taxon>
        <taxon>Staphylococcaceae</taxon>
        <taxon>Staphylococcus</taxon>
    </lineage>
</organism>
<proteinExistence type="inferred from homology"/>
<dbReference type="EMBL" id="CP000730">
    <property type="protein sequence ID" value="ABX30211.1"/>
    <property type="molecule type" value="Genomic_DNA"/>
</dbReference>
<dbReference type="RefSeq" id="WP_000868342.1">
    <property type="nucleotide sequence ID" value="NC_010079.1"/>
</dbReference>
<dbReference type="SMR" id="A8Z334"/>
<dbReference type="GeneID" id="98346539"/>
<dbReference type="KEGG" id="sax:USA300HOU_2218"/>
<dbReference type="HOGENOM" id="CLU_135723_6_2_9"/>
<dbReference type="GO" id="GO:0005737">
    <property type="term" value="C:cytoplasm"/>
    <property type="evidence" value="ECO:0007669"/>
    <property type="project" value="UniProtKB-ARBA"/>
</dbReference>
<dbReference type="GO" id="GO:1990904">
    <property type="term" value="C:ribonucleoprotein complex"/>
    <property type="evidence" value="ECO:0007669"/>
    <property type="project" value="UniProtKB-KW"/>
</dbReference>
<dbReference type="GO" id="GO:0005840">
    <property type="term" value="C:ribosome"/>
    <property type="evidence" value="ECO:0007669"/>
    <property type="project" value="UniProtKB-KW"/>
</dbReference>
<dbReference type="GO" id="GO:0003735">
    <property type="term" value="F:structural constituent of ribosome"/>
    <property type="evidence" value="ECO:0007669"/>
    <property type="project" value="InterPro"/>
</dbReference>
<dbReference type="GO" id="GO:0006412">
    <property type="term" value="P:translation"/>
    <property type="evidence" value="ECO:0007669"/>
    <property type="project" value="UniProtKB-UniRule"/>
</dbReference>
<dbReference type="HAMAP" id="MF_00251">
    <property type="entry name" value="Ribosomal_bL36"/>
    <property type="match status" value="1"/>
</dbReference>
<dbReference type="InterPro" id="IPR000473">
    <property type="entry name" value="Ribosomal_bL36"/>
</dbReference>
<dbReference type="InterPro" id="IPR035977">
    <property type="entry name" value="Ribosomal_bL36_sp"/>
</dbReference>
<dbReference type="NCBIfam" id="TIGR01022">
    <property type="entry name" value="rpmJ_bact"/>
    <property type="match status" value="1"/>
</dbReference>
<dbReference type="PANTHER" id="PTHR42888">
    <property type="entry name" value="50S RIBOSOMAL PROTEIN L36, CHLOROPLASTIC"/>
    <property type="match status" value="1"/>
</dbReference>
<dbReference type="PANTHER" id="PTHR42888:SF1">
    <property type="entry name" value="LARGE RIBOSOMAL SUBUNIT PROTEIN BL36C"/>
    <property type="match status" value="1"/>
</dbReference>
<dbReference type="Pfam" id="PF00444">
    <property type="entry name" value="Ribosomal_L36"/>
    <property type="match status" value="1"/>
</dbReference>
<dbReference type="SUPFAM" id="SSF57840">
    <property type="entry name" value="Ribosomal protein L36"/>
    <property type="match status" value="1"/>
</dbReference>
<dbReference type="PROSITE" id="PS00828">
    <property type="entry name" value="RIBOSOMAL_L36"/>
    <property type="match status" value="1"/>
</dbReference>
<gene>
    <name evidence="1" type="primary">rpmJ</name>
    <name type="ordered locus">USA300HOU_2218</name>
</gene>
<keyword id="KW-0687">Ribonucleoprotein</keyword>
<keyword id="KW-0689">Ribosomal protein</keyword>
<name>RL36_STAAT</name>
<comment type="similarity">
    <text evidence="1">Belongs to the bacterial ribosomal protein bL36 family.</text>
</comment>